<keyword id="KW-0067">ATP-binding</keyword>
<keyword id="KW-0460">Magnesium</keyword>
<keyword id="KW-0479">Metal-binding</keyword>
<keyword id="KW-0547">Nucleotide-binding</keyword>
<keyword id="KW-0548">Nucleotidyltransferase</keyword>
<keyword id="KW-1185">Reference proteome</keyword>
<keyword id="KW-0692">RNA repair</keyword>
<keyword id="KW-0694">RNA-binding</keyword>
<keyword id="KW-0808">Transferase</keyword>
<keyword id="KW-0819">tRNA processing</keyword>
<comment type="function">
    <text evidence="1">Catalyzes the addition and repair of the essential 3'-terminal CCA sequence in tRNAs without using a nucleic acid template. Adds these three nucleotides in the order of C, C, and A to the tRNA nucleotide-73, using CTP and ATP as substrates and producing inorganic pyrophosphate. tRNA 3'-terminal CCA addition is required both for tRNA processing and repair. Also involved in tRNA surveillance by mediating tandem CCA addition to generate a CCACCA at the 3' terminus of unstable tRNAs. While stable tRNAs receive only 3'-terminal CCA, unstable tRNAs are marked with CCACCA and rapidly degraded.</text>
</comment>
<comment type="catalytic activity">
    <reaction evidence="1">
        <text>a tRNA precursor + 2 CTP + ATP = a tRNA with a 3' CCA end + 3 diphosphate</text>
        <dbReference type="Rhea" id="RHEA:14433"/>
        <dbReference type="Rhea" id="RHEA-COMP:10465"/>
        <dbReference type="Rhea" id="RHEA-COMP:10468"/>
        <dbReference type="ChEBI" id="CHEBI:30616"/>
        <dbReference type="ChEBI" id="CHEBI:33019"/>
        <dbReference type="ChEBI" id="CHEBI:37563"/>
        <dbReference type="ChEBI" id="CHEBI:74896"/>
        <dbReference type="ChEBI" id="CHEBI:83071"/>
        <dbReference type="EC" id="2.7.7.72"/>
    </reaction>
</comment>
<comment type="catalytic activity">
    <reaction evidence="1">
        <text>a tRNA with a 3' CCA end + 2 CTP + ATP = a tRNA with a 3' CCACCA end + 3 diphosphate</text>
        <dbReference type="Rhea" id="RHEA:76235"/>
        <dbReference type="Rhea" id="RHEA-COMP:10468"/>
        <dbReference type="Rhea" id="RHEA-COMP:18655"/>
        <dbReference type="ChEBI" id="CHEBI:30616"/>
        <dbReference type="ChEBI" id="CHEBI:33019"/>
        <dbReference type="ChEBI" id="CHEBI:37563"/>
        <dbReference type="ChEBI" id="CHEBI:83071"/>
        <dbReference type="ChEBI" id="CHEBI:195187"/>
    </reaction>
    <physiologicalReaction direction="left-to-right" evidence="1">
        <dbReference type="Rhea" id="RHEA:76236"/>
    </physiologicalReaction>
</comment>
<comment type="cofactor">
    <cofactor evidence="1">
        <name>Mg(2+)</name>
        <dbReference type="ChEBI" id="CHEBI:18420"/>
    </cofactor>
</comment>
<comment type="subunit">
    <text evidence="1">Homodimer.</text>
</comment>
<comment type="miscellaneous">
    <text evidence="1">A single active site specifically recognizes both ATP and CTP and is responsible for their addition.</text>
</comment>
<comment type="similarity">
    <text evidence="1">Belongs to the tRNA nucleotidyltransferase/poly(A) polymerase family. Archaeal CCA-adding enzyme subfamily.</text>
</comment>
<dbReference type="EC" id="2.7.7.72" evidence="1"/>
<dbReference type="EMBL" id="AL445067">
    <property type="protein sequence ID" value="CAC12566.1"/>
    <property type="molecule type" value="Genomic_DNA"/>
</dbReference>
<dbReference type="PIR" id="A59474">
    <property type="entry name" value="A59474"/>
</dbReference>
<dbReference type="RefSeq" id="WP_010901849.1">
    <property type="nucleotide sequence ID" value="NC_002578.1"/>
</dbReference>
<dbReference type="SMR" id="Q9HI95"/>
<dbReference type="FunCoup" id="Q9HI95">
    <property type="interactions" value="1"/>
</dbReference>
<dbReference type="STRING" id="273075.gene:9572675"/>
<dbReference type="PaxDb" id="273075-Ta1446"/>
<dbReference type="EnsemblBacteria" id="CAC12566">
    <property type="protein sequence ID" value="CAC12566"/>
    <property type="gene ID" value="CAC12566"/>
</dbReference>
<dbReference type="KEGG" id="tac:Ta1446"/>
<dbReference type="eggNOG" id="arCOG04249">
    <property type="taxonomic scope" value="Archaea"/>
</dbReference>
<dbReference type="HOGENOM" id="CLU_044679_1_0_2"/>
<dbReference type="InParanoid" id="Q9HI95"/>
<dbReference type="OrthoDB" id="7378at2157"/>
<dbReference type="Proteomes" id="UP000001024">
    <property type="component" value="Chromosome"/>
</dbReference>
<dbReference type="GO" id="GO:0005524">
    <property type="term" value="F:ATP binding"/>
    <property type="evidence" value="ECO:0007669"/>
    <property type="project" value="UniProtKB-UniRule"/>
</dbReference>
<dbReference type="GO" id="GO:0004810">
    <property type="term" value="F:CCA tRNA nucleotidyltransferase activity"/>
    <property type="evidence" value="ECO:0007669"/>
    <property type="project" value="UniProtKB-UniRule"/>
</dbReference>
<dbReference type="GO" id="GO:0000287">
    <property type="term" value="F:magnesium ion binding"/>
    <property type="evidence" value="ECO:0007669"/>
    <property type="project" value="UniProtKB-UniRule"/>
</dbReference>
<dbReference type="GO" id="GO:0000049">
    <property type="term" value="F:tRNA binding"/>
    <property type="evidence" value="ECO:0007669"/>
    <property type="project" value="UniProtKB-UniRule"/>
</dbReference>
<dbReference type="GO" id="GO:0042245">
    <property type="term" value="P:RNA repair"/>
    <property type="evidence" value="ECO:0007669"/>
    <property type="project" value="UniProtKB-KW"/>
</dbReference>
<dbReference type="GO" id="GO:0001680">
    <property type="term" value="P:tRNA 3'-terminal CCA addition"/>
    <property type="evidence" value="ECO:0007669"/>
    <property type="project" value="UniProtKB-UniRule"/>
</dbReference>
<dbReference type="CDD" id="cd05400">
    <property type="entry name" value="NT_2-5OAS_ClassI-CCAase"/>
    <property type="match status" value="1"/>
</dbReference>
<dbReference type="Gene3D" id="3.30.70.1550">
    <property type="entry name" value="Archaeal tRNA CCA-adding enzyme catalytic domain"/>
    <property type="match status" value="1"/>
</dbReference>
<dbReference type="Gene3D" id="3.30.460.10">
    <property type="entry name" value="Beta Polymerase, domain 2"/>
    <property type="match status" value="1"/>
</dbReference>
<dbReference type="Gene3D" id="1.10.1410.30">
    <property type="entry name" value="CCA tRNA nucleotidyltransferase, domain 2"/>
    <property type="match status" value="1"/>
</dbReference>
<dbReference type="Gene3D" id="3.30.70.590">
    <property type="entry name" value="Poly(A) polymerase predicted RNA binding domain"/>
    <property type="match status" value="1"/>
</dbReference>
<dbReference type="HAMAP" id="MF_01264">
    <property type="entry name" value="CCA_arch"/>
    <property type="match status" value="1"/>
</dbReference>
<dbReference type="InterPro" id="IPR048833">
    <property type="entry name" value="CAA_C"/>
</dbReference>
<dbReference type="InterPro" id="IPR008229">
    <property type="entry name" value="CCA-adding_arc"/>
</dbReference>
<dbReference type="InterPro" id="IPR042090">
    <property type="entry name" value="CCA_tRNA_nucleotrans_2"/>
</dbReference>
<dbReference type="InterPro" id="IPR006116">
    <property type="entry name" value="NT_2-5OAS_ClassI-CCAase"/>
</dbReference>
<dbReference type="InterPro" id="IPR043519">
    <property type="entry name" value="NT_sf"/>
</dbReference>
<dbReference type="InterPro" id="IPR011068">
    <property type="entry name" value="NuclTrfase_I-like_C"/>
</dbReference>
<dbReference type="InterPro" id="IPR002934">
    <property type="entry name" value="Polymerase_NTP_transf_dom"/>
</dbReference>
<dbReference type="InterPro" id="IPR015329">
    <property type="entry name" value="tRNA_NucTransf2"/>
</dbReference>
<dbReference type="NCBIfam" id="TIGR03671">
    <property type="entry name" value="cca_archaeal"/>
    <property type="match status" value="1"/>
</dbReference>
<dbReference type="PANTHER" id="PTHR39643">
    <property type="entry name" value="CCA-ADDING ENZYME"/>
    <property type="match status" value="1"/>
</dbReference>
<dbReference type="PANTHER" id="PTHR39643:SF1">
    <property type="entry name" value="CCA-ADDING ENZYME"/>
    <property type="match status" value="1"/>
</dbReference>
<dbReference type="Pfam" id="PF21133">
    <property type="entry name" value="CAA_C"/>
    <property type="match status" value="1"/>
</dbReference>
<dbReference type="Pfam" id="PF01909">
    <property type="entry name" value="NTP_transf_2"/>
    <property type="match status" value="1"/>
</dbReference>
<dbReference type="Pfam" id="PF09249">
    <property type="entry name" value="tRNA_NucTransf2"/>
    <property type="match status" value="1"/>
</dbReference>
<dbReference type="PIRSF" id="PIRSF005335">
    <property type="entry name" value="CCA_arch"/>
    <property type="match status" value="1"/>
</dbReference>
<dbReference type="SUPFAM" id="SSF81301">
    <property type="entry name" value="Nucleotidyltransferase"/>
    <property type="match status" value="1"/>
</dbReference>
<dbReference type="SUPFAM" id="SSF55003">
    <property type="entry name" value="PAP/Archaeal CCA-adding enzyme, C-terminal domain"/>
    <property type="match status" value="1"/>
</dbReference>
<dbReference type="SUPFAM" id="SSF81631">
    <property type="entry name" value="PAP/OAS1 substrate-binding domain"/>
    <property type="match status" value="1"/>
</dbReference>
<name>CCA_THEAC</name>
<evidence type="ECO:0000255" key="1">
    <source>
        <dbReference type="HAMAP-Rule" id="MF_01264"/>
    </source>
</evidence>
<accession>Q9HI95</accession>
<feature type="chain" id="PRO_0000139085" description="CCA-adding enzyme">
    <location>
        <begin position="1"/>
        <end position="431"/>
    </location>
</feature>
<feature type="binding site" evidence="1">
    <location>
        <position position="50"/>
    </location>
    <ligand>
        <name>ATP</name>
        <dbReference type="ChEBI" id="CHEBI:30616"/>
    </ligand>
</feature>
<feature type="binding site" evidence="1">
    <location>
        <position position="50"/>
    </location>
    <ligand>
        <name>CTP</name>
        <dbReference type="ChEBI" id="CHEBI:37563"/>
    </ligand>
</feature>
<feature type="binding site" evidence="1">
    <location>
        <position position="53"/>
    </location>
    <ligand>
        <name>ATP</name>
        <dbReference type="ChEBI" id="CHEBI:30616"/>
    </ligand>
</feature>
<feature type="binding site" evidence="1">
    <location>
        <position position="53"/>
    </location>
    <ligand>
        <name>CTP</name>
        <dbReference type="ChEBI" id="CHEBI:37563"/>
    </ligand>
</feature>
<feature type="binding site" evidence="1">
    <location>
        <position position="61"/>
    </location>
    <ligand>
        <name>Mg(2+)</name>
        <dbReference type="ChEBI" id="CHEBI:18420"/>
    </ligand>
</feature>
<feature type="binding site" evidence="1">
    <location>
        <position position="63"/>
    </location>
    <ligand>
        <name>Mg(2+)</name>
        <dbReference type="ChEBI" id="CHEBI:18420"/>
    </ligand>
</feature>
<feature type="binding site" evidence="1">
    <location>
        <position position="112"/>
    </location>
    <ligand>
        <name>Mg(2+)</name>
        <dbReference type="ChEBI" id="CHEBI:18420"/>
    </ligand>
</feature>
<feature type="binding site" evidence="1">
    <location>
        <position position="135"/>
    </location>
    <ligand>
        <name>ATP</name>
        <dbReference type="ChEBI" id="CHEBI:30616"/>
    </ligand>
</feature>
<feature type="binding site" evidence="1">
    <location>
        <position position="135"/>
    </location>
    <ligand>
        <name>CTP</name>
        <dbReference type="ChEBI" id="CHEBI:37563"/>
    </ligand>
</feature>
<feature type="binding site" evidence="1">
    <location>
        <position position="155"/>
    </location>
    <ligand>
        <name>ATP</name>
        <dbReference type="ChEBI" id="CHEBI:30616"/>
    </ligand>
</feature>
<feature type="binding site" evidence="1">
    <location>
        <position position="155"/>
    </location>
    <ligand>
        <name>CTP</name>
        <dbReference type="ChEBI" id="CHEBI:37563"/>
    </ligand>
</feature>
<feature type="binding site" evidence="1">
    <location>
        <position position="164"/>
    </location>
    <ligand>
        <name>ATP</name>
        <dbReference type="ChEBI" id="CHEBI:30616"/>
    </ligand>
</feature>
<feature type="binding site" evidence="1">
    <location>
        <position position="164"/>
    </location>
    <ligand>
        <name>CTP</name>
        <dbReference type="ChEBI" id="CHEBI:37563"/>
    </ligand>
</feature>
<sequence>MIDYQEVLSRYRPTQEEENKLKIISDDIIRKINSICRSRGLRAEAVIVGSYAKGTNLRDGDLDIFIAFDRDYPEEIINTEGLHIGHAVIPNGREKYAEHPYVSGEIGGVKIDVVPCYKMSFGDKKISAVDRTLLHTEYVNGHLDEKGRDEVRLLKIFTKSIGVYGAEARTFGFSGYLCELLVIRFGSFENVIRYFSKAKGRVLIDLDERFRDPMVLIDPVDPDRNVASPVSLESLSRMKIASKMFLSSPDEGFFQIEHNGKNVQYHDRGTCIMIYSLPKPDLTDDVIYPQVYRFRSVLQKIMESHEIRVISSEIDVSDRIYVLIETPACAEERIRVHTGPPVDTDNAVDFVNSWKARDRSRGPYIVADRLYVDVFTGQRSIEDIVRQEIFNYSIGKNLDRFKKSMEIMKFNVGMKSLPVLDKFFGADVFRK</sequence>
<reference key="1">
    <citation type="journal article" date="2000" name="Nature">
        <title>The genome sequence of the thermoacidophilic scavenger Thermoplasma acidophilum.</title>
        <authorList>
            <person name="Ruepp A."/>
            <person name="Graml W."/>
            <person name="Santos-Martinez M.-L."/>
            <person name="Koretke K.K."/>
            <person name="Volker C."/>
            <person name="Mewes H.-W."/>
            <person name="Frishman D."/>
            <person name="Stocker S."/>
            <person name="Lupas A.N."/>
            <person name="Baumeister W."/>
        </authorList>
    </citation>
    <scope>NUCLEOTIDE SEQUENCE [LARGE SCALE GENOMIC DNA]</scope>
    <source>
        <strain>ATCC 25905 / DSM 1728 / JCM 9062 / NBRC 15155 / AMRC-C165</strain>
    </source>
</reference>
<protein>
    <recommendedName>
        <fullName evidence="1">CCA-adding enzyme</fullName>
        <ecNumber evidence="1">2.7.7.72</ecNumber>
    </recommendedName>
    <alternativeName>
        <fullName evidence="1">CCA tRNA nucleotidyltransferase</fullName>
    </alternativeName>
    <alternativeName>
        <fullName evidence="1">tRNA CCA-pyrophosphorylase</fullName>
    </alternativeName>
    <alternativeName>
        <fullName evidence="1">tRNA adenylyl-/cytidylyl- transferase</fullName>
    </alternativeName>
    <alternativeName>
        <fullName evidence="1">tRNA nucleotidyltransferase</fullName>
    </alternativeName>
    <alternativeName>
        <fullName evidence="1">tRNA-NT</fullName>
    </alternativeName>
</protein>
<proteinExistence type="inferred from homology"/>
<gene>
    <name evidence="1" type="primary">cca</name>
    <name type="ordered locus">Ta1446</name>
</gene>
<organism>
    <name type="scientific">Thermoplasma acidophilum (strain ATCC 25905 / DSM 1728 / JCM 9062 / NBRC 15155 / AMRC-C165)</name>
    <dbReference type="NCBI Taxonomy" id="273075"/>
    <lineage>
        <taxon>Archaea</taxon>
        <taxon>Methanobacteriati</taxon>
        <taxon>Thermoplasmatota</taxon>
        <taxon>Thermoplasmata</taxon>
        <taxon>Thermoplasmatales</taxon>
        <taxon>Thermoplasmataceae</taxon>
        <taxon>Thermoplasma</taxon>
    </lineage>
</organism>